<protein>
    <recommendedName>
        <fullName evidence="7">Class II hydrophobin 5</fullName>
    </recommendedName>
</protein>
<organism>
    <name type="scientific">Passalora fulva</name>
    <name type="common">Tomato leaf mold</name>
    <name type="synonym">Cladosporium fulvum</name>
    <dbReference type="NCBI Taxonomy" id="5499"/>
    <lineage>
        <taxon>Eukaryota</taxon>
        <taxon>Fungi</taxon>
        <taxon>Dikarya</taxon>
        <taxon>Ascomycota</taxon>
        <taxon>Pezizomycotina</taxon>
        <taxon>Dothideomycetes</taxon>
        <taxon>Dothideomycetidae</taxon>
        <taxon>Mycosphaerellales</taxon>
        <taxon>Mycosphaerellaceae</taxon>
        <taxon>Fulvia</taxon>
    </lineage>
</organism>
<proteinExistence type="evidence at transcript level"/>
<sequence>MQFLVLALASLAAAAPSIKLRAPSDVCPALDTPLCCQADVLGVLDLTCEAPSDDTSVSNFEAACATTGLTARCCTLPLLGEALLCTTP</sequence>
<dbReference type="EMBL" id="AJ133703">
    <property type="protein sequence ID" value="CAB39312.1"/>
    <property type="molecule type" value="mRNA"/>
</dbReference>
<dbReference type="EMBL" id="AJ251295">
    <property type="protein sequence ID" value="CAC27408.1"/>
    <property type="molecule type" value="Genomic_DNA"/>
</dbReference>
<dbReference type="EMBL" id="CP090170">
    <property type="protein sequence ID" value="UJO20875.1"/>
    <property type="molecule type" value="Genomic_DNA"/>
</dbReference>
<dbReference type="SMR" id="O94203"/>
<dbReference type="OMA" id="MCCILPI"/>
<dbReference type="OrthoDB" id="4500971at2759"/>
<dbReference type="Proteomes" id="UP000756132">
    <property type="component" value="Chromosome 8"/>
</dbReference>
<dbReference type="GO" id="GO:0005576">
    <property type="term" value="C:extracellular region"/>
    <property type="evidence" value="ECO:0007669"/>
    <property type="project" value="UniProtKB-SubCell"/>
</dbReference>
<dbReference type="CDD" id="cd23508">
    <property type="entry name" value="hydrophobin_II"/>
    <property type="match status" value="1"/>
</dbReference>
<dbReference type="Gene3D" id="3.20.120.10">
    <property type="entry name" value="Hydrophobin"/>
    <property type="match status" value="1"/>
</dbReference>
<dbReference type="InterPro" id="IPR010636">
    <property type="entry name" value="Cerato-ulmin_hydrophobin"/>
</dbReference>
<dbReference type="InterPro" id="IPR036686">
    <property type="entry name" value="Hydrophobin_sf"/>
</dbReference>
<dbReference type="PANTHER" id="PTHR42341">
    <property type="entry name" value="HYDROPHOBIN"/>
    <property type="match status" value="1"/>
</dbReference>
<dbReference type="PANTHER" id="PTHR42341:SF2">
    <property type="entry name" value="HYDROPHOBIN"/>
    <property type="match status" value="1"/>
</dbReference>
<dbReference type="Pfam" id="PF06766">
    <property type="entry name" value="Hydrophobin_2"/>
    <property type="match status" value="1"/>
</dbReference>
<dbReference type="SUPFAM" id="SSF101751">
    <property type="entry name" value="Hydrophobin II, HfbII"/>
    <property type="match status" value="1"/>
</dbReference>
<evidence type="ECO:0000250" key="1">
    <source>
        <dbReference type="UniProtKB" id="P52754"/>
    </source>
</evidence>
<evidence type="ECO:0000250" key="2">
    <source>
        <dbReference type="UniProtKB" id="Q04571"/>
    </source>
</evidence>
<evidence type="ECO:0000255" key="3"/>
<evidence type="ECO:0000269" key="4">
    <source>
    </source>
</evidence>
<evidence type="ECO:0000269" key="5">
    <source>
    </source>
</evidence>
<evidence type="ECO:0000269" key="6">
    <source>
    </source>
</evidence>
<evidence type="ECO:0000303" key="7">
    <source>
    </source>
</evidence>
<evidence type="ECO:0000305" key="8"/>
<evidence type="ECO:0000305" key="9">
    <source>
    </source>
</evidence>
<reference key="1">
    <citation type="journal article" date="1999" name="Mol. Gen. Genet.">
        <title>Isolation and characterisation of five different hydrophobin-encoding cDNAs from the fungal tomato pathogen Cladosporium fulvum.</title>
        <authorList>
            <person name="Segers G.C."/>
            <person name="Hamada W."/>
            <person name="Oliver R.P."/>
            <person name="Spanu P.D."/>
        </authorList>
    </citation>
    <scope>NUCLEOTIDE SEQUENCE [MRNA]</scope>
    <scope>INDUCTION</scope>
    <scope>TISSUE SPECIFICITY</scope>
    <source>
        <strain>Race 4</strain>
    </source>
</reference>
<reference key="2">
    <citation type="journal article" date="2001" name="Microbiol. Res.">
        <title>HCf-6, a novel class II hydrophobin from Cladosporium fulvum.</title>
        <authorList>
            <person name="Nielsen P.S."/>
            <person name="Clark A.J."/>
            <person name="Oliver R.P."/>
            <person name="Huber M."/>
            <person name="Spanu P.D."/>
        </authorList>
    </citation>
    <scope>NUCLEOTIDE SEQUENCE [GENOMIC DNA]</scope>
    <scope>INDUCTION</scope>
    <source>
        <strain>Race 4</strain>
    </source>
</reference>
<reference key="3">
    <citation type="journal article" date="2022" name="Microb. Genom.">
        <title>A chromosome-scale genome assembly of the tomato pathogen Cladosporium fulvum reveals a compartmentalized genome architecture and the presence of a dispensable chromosome.</title>
        <authorList>
            <person name="Zaccaron A.Z."/>
            <person name="Chen L.-H."/>
            <person name="Samaras A."/>
            <person name="Stergiopoulos I."/>
        </authorList>
    </citation>
    <scope>NUCLEOTIDE SEQUENCE [LARGE SCALE GENOMIC DNA]</scope>
    <source>
        <strain>Race5_Kim</strain>
    </source>
</reference>
<reference key="4">
    <citation type="journal article" date="2008" name="FEMS Microbiol. Lett.">
        <title>Localization of Cladosporium fulvum hydrophobins reveals a role for HCf-6 in adhesion.</title>
        <authorList>
            <person name="Lacroix H."/>
            <person name="Whiteford J.R."/>
            <person name="Spanu P.D."/>
        </authorList>
    </citation>
    <scope>TISSUE SPECIFICITY</scope>
</reference>
<feature type="signal peptide" evidence="3">
    <location>
        <begin position="1"/>
        <end position="14"/>
    </location>
</feature>
<feature type="chain" id="PRO_0000462444" description="Class II hydrophobin 5">
    <location>
        <begin position="15"/>
        <end position="88"/>
    </location>
</feature>
<feature type="disulfide bond" evidence="2">
    <location>
        <begin position="27"/>
        <end position="73"/>
    </location>
</feature>
<feature type="disulfide bond" evidence="2">
    <location>
        <begin position="35"/>
        <end position="64"/>
    </location>
</feature>
<feature type="disulfide bond" evidence="2">
    <location>
        <begin position="36"/>
        <end position="48"/>
    </location>
</feature>
<feature type="disulfide bond" evidence="2">
    <location>
        <begin position="74"/>
        <end position="85"/>
    </location>
</feature>
<keyword id="KW-0134">Cell wall</keyword>
<keyword id="KW-1015">Disulfide bond</keyword>
<keyword id="KW-1185">Reference proteome</keyword>
<keyword id="KW-0964">Secreted</keyword>
<keyword id="KW-0732">Signal</keyword>
<comment type="function">
    <text evidence="8">Aerial growth, conidiation, and dispersal of filamentous fungi in the environment rely upon a capability of their secreting small amphipathic proteins called hydrophobins (HPBs) with low sequence identity. Class I can self-assemble into an outermost layer of rodlet bundles on aerial cell surfaces, conferring cellular hydrophobicity that supports fungal growth, development and dispersal; whereas Class II form highly ordered films at water-air interfaces through intermolecular interactions but contribute nothing to the rodlet structure.</text>
</comment>
<comment type="subunit">
    <text evidence="1">Homotetramer. Further self-assembles to form highly ordered films at water-air interfaces through intermolecular interactions.</text>
</comment>
<comment type="subcellular location">
    <subcellularLocation>
        <location evidence="9">Secreted</location>
        <location evidence="9">Cell wall</location>
    </subcellularLocation>
    <subcellularLocation>
        <location evidence="9">Secreted</location>
    </subcellularLocation>
</comment>
<comment type="tissue specificity">
    <text evidence="4 6">Only appears on young aerial hyphae (PubMed:18958901). HCf-5 is the most abundant transcript in sporulating mycelium (PubMed:10394901).</text>
</comment>
<comment type="induction">
    <text evidence="4 5">Expression is decreased during tomato plant infection (PubMed:10394901). Expression is up-regulated by nitrogen starvation, but down-regulated in the absence of carbon (PubMed:10394901, PubMed:11372654). Expression increases noticeably upon sporulation (PubMed:11372654).</text>
</comment>
<comment type="similarity">
    <text evidence="8">Belongs to the cerato-ulmin hydrophobin family.</text>
</comment>
<gene>
    <name evidence="7" type="primary">hcf-5</name>
    <name type="ORF">CLAFUR5_11007</name>
</gene>
<name>HCF5_PASFU</name>
<accession>O94203</accession>